<organism>
    <name type="scientific">Trieres chinensis</name>
    <name type="common">Marine centric diatom</name>
    <name type="synonym">Odontella sinensis</name>
    <dbReference type="NCBI Taxonomy" id="1514140"/>
    <lineage>
        <taxon>Eukaryota</taxon>
        <taxon>Sar</taxon>
        <taxon>Stramenopiles</taxon>
        <taxon>Ochrophyta</taxon>
        <taxon>Bacillariophyta</taxon>
        <taxon>Mediophyceae</taxon>
        <taxon>Biddulphiophycidae</taxon>
        <taxon>Eupodiscales</taxon>
        <taxon>Parodontellaceae</taxon>
        <taxon>Trieres</taxon>
    </lineage>
</organism>
<feature type="chain" id="PRO_0000084660" description="ATP-dependent zinc metalloprotease FtsH">
    <location>
        <begin position="1"/>
        <end position="644"/>
    </location>
</feature>
<feature type="topological domain" description="Stromal" evidence="1">
    <location>
        <begin position="1"/>
        <end position="11"/>
    </location>
</feature>
<feature type="transmembrane region" description="Helical" evidence="1">
    <location>
        <begin position="12"/>
        <end position="32"/>
    </location>
</feature>
<feature type="topological domain" description="Lumenal" evidence="1">
    <location>
        <begin position="33"/>
        <end position="128"/>
    </location>
</feature>
<feature type="transmembrane region" description="Helical" evidence="1">
    <location>
        <begin position="129"/>
        <end position="149"/>
    </location>
</feature>
<feature type="topological domain" description="Stromal" evidence="1">
    <location>
        <begin position="150"/>
        <end position="644"/>
    </location>
</feature>
<feature type="active site" evidence="1">
    <location>
        <position position="448"/>
    </location>
</feature>
<feature type="binding site" evidence="1">
    <location>
        <begin position="226"/>
        <end position="233"/>
    </location>
    <ligand>
        <name>ATP</name>
        <dbReference type="ChEBI" id="CHEBI:30616"/>
    </ligand>
</feature>
<feature type="binding site" evidence="1">
    <location>
        <position position="447"/>
    </location>
    <ligand>
        <name>Zn(2+)</name>
        <dbReference type="ChEBI" id="CHEBI:29105"/>
        <note>catalytic</note>
    </ligand>
</feature>
<feature type="binding site" evidence="1">
    <location>
        <position position="451"/>
    </location>
    <ligand>
        <name>Zn(2+)</name>
        <dbReference type="ChEBI" id="CHEBI:29105"/>
        <note>catalytic</note>
    </ligand>
</feature>
<feature type="binding site" evidence="1">
    <location>
        <position position="525"/>
    </location>
    <ligand>
        <name>Zn(2+)</name>
        <dbReference type="ChEBI" id="CHEBI:29105"/>
        <note>catalytic</note>
    </ligand>
</feature>
<evidence type="ECO:0000255" key="1">
    <source>
        <dbReference type="HAMAP-Rule" id="MF_01458"/>
    </source>
</evidence>
<proteinExistence type="inferred from homology"/>
<gene>
    <name evidence="1" type="primary">ftsH</name>
    <name type="synonym">ycf25</name>
</gene>
<comment type="function">
    <text evidence="1">Acts as a processive, ATP-dependent zinc metallopeptidase.</text>
</comment>
<comment type="cofactor">
    <cofactor evidence="1">
        <name>Zn(2+)</name>
        <dbReference type="ChEBI" id="CHEBI:29105"/>
    </cofactor>
    <text evidence="1">Binds 1 zinc ion per subunit.</text>
</comment>
<comment type="subunit">
    <text evidence="1">Homohexamer.</text>
</comment>
<comment type="subcellular location">
    <subcellularLocation>
        <location evidence="1">Plastid</location>
        <location evidence="1">Chloroplast thylakoid membrane</location>
        <topology evidence="1">Multi-pass membrane protein</topology>
        <orientation evidence="1">Stromal side</orientation>
    </subcellularLocation>
</comment>
<comment type="similarity">
    <text evidence="1">In the central section; belongs to the AAA ATPase family.</text>
</comment>
<comment type="similarity">
    <text evidence="1">In the C-terminal section; belongs to the peptidase M41 family.</text>
</comment>
<geneLocation type="chloroplast"/>
<dbReference type="EC" id="3.4.24.-" evidence="1"/>
<dbReference type="EMBL" id="Z67753">
    <property type="protein sequence ID" value="CAA91674.1"/>
    <property type="molecule type" value="Genomic_DNA"/>
</dbReference>
<dbReference type="PIR" id="S78301">
    <property type="entry name" value="S78301"/>
</dbReference>
<dbReference type="RefSeq" id="NP_043642.1">
    <property type="nucleotide sequence ID" value="NC_001713.1"/>
</dbReference>
<dbReference type="SMR" id="P49825"/>
<dbReference type="MEROPS" id="M41.017"/>
<dbReference type="GeneID" id="801815"/>
<dbReference type="GO" id="GO:0009535">
    <property type="term" value="C:chloroplast thylakoid membrane"/>
    <property type="evidence" value="ECO:0007669"/>
    <property type="project" value="UniProtKB-SubCell"/>
</dbReference>
<dbReference type="GO" id="GO:0005524">
    <property type="term" value="F:ATP binding"/>
    <property type="evidence" value="ECO:0007669"/>
    <property type="project" value="UniProtKB-UniRule"/>
</dbReference>
<dbReference type="GO" id="GO:0016887">
    <property type="term" value="F:ATP hydrolysis activity"/>
    <property type="evidence" value="ECO:0007669"/>
    <property type="project" value="UniProtKB-UniRule"/>
</dbReference>
<dbReference type="GO" id="GO:0004176">
    <property type="term" value="F:ATP-dependent peptidase activity"/>
    <property type="evidence" value="ECO:0007669"/>
    <property type="project" value="InterPro"/>
</dbReference>
<dbReference type="GO" id="GO:0004222">
    <property type="term" value="F:metalloendopeptidase activity"/>
    <property type="evidence" value="ECO:0007669"/>
    <property type="project" value="InterPro"/>
</dbReference>
<dbReference type="GO" id="GO:0008270">
    <property type="term" value="F:zinc ion binding"/>
    <property type="evidence" value="ECO:0007669"/>
    <property type="project" value="UniProtKB-UniRule"/>
</dbReference>
<dbReference type="GO" id="GO:0030163">
    <property type="term" value="P:protein catabolic process"/>
    <property type="evidence" value="ECO:0007669"/>
    <property type="project" value="UniProtKB-UniRule"/>
</dbReference>
<dbReference type="GO" id="GO:0006508">
    <property type="term" value="P:proteolysis"/>
    <property type="evidence" value="ECO:0007669"/>
    <property type="project" value="UniProtKB-KW"/>
</dbReference>
<dbReference type="CDD" id="cd19501">
    <property type="entry name" value="RecA-like_FtsH"/>
    <property type="match status" value="1"/>
</dbReference>
<dbReference type="FunFam" id="1.10.8.60:FF:000001">
    <property type="entry name" value="ATP-dependent zinc metalloprotease FtsH"/>
    <property type="match status" value="1"/>
</dbReference>
<dbReference type="FunFam" id="1.20.58.760:FF:000001">
    <property type="entry name" value="ATP-dependent zinc metalloprotease FtsH"/>
    <property type="match status" value="1"/>
</dbReference>
<dbReference type="FunFam" id="3.40.50.300:FF:000001">
    <property type="entry name" value="ATP-dependent zinc metalloprotease FtsH"/>
    <property type="match status" value="1"/>
</dbReference>
<dbReference type="Gene3D" id="1.10.8.60">
    <property type="match status" value="1"/>
</dbReference>
<dbReference type="Gene3D" id="3.30.720.210">
    <property type="match status" value="1"/>
</dbReference>
<dbReference type="Gene3D" id="3.40.50.300">
    <property type="entry name" value="P-loop containing nucleotide triphosphate hydrolases"/>
    <property type="match status" value="1"/>
</dbReference>
<dbReference type="Gene3D" id="1.20.58.760">
    <property type="entry name" value="Peptidase M41"/>
    <property type="match status" value="1"/>
</dbReference>
<dbReference type="HAMAP" id="MF_01458">
    <property type="entry name" value="FtsH"/>
    <property type="match status" value="1"/>
</dbReference>
<dbReference type="InterPro" id="IPR003593">
    <property type="entry name" value="AAA+_ATPase"/>
</dbReference>
<dbReference type="InterPro" id="IPR041569">
    <property type="entry name" value="AAA_lid_3"/>
</dbReference>
<dbReference type="InterPro" id="IPR003959">
    <property type="entry name" value="ATPase_AAA_core"/>
</dbReference>
<dbReference type="InterPro" id="IPR003960">
    <property type="entry name" value="ATPase_AAA_CS"/>
</dbReference>
<dbReference type="InterPro" id="IPR005936">
    <property type="entry name" value="FtsH"/>
</dbReference>
<dbReference type="InterPro" id="IPR027417">
    <property type="entry name" value="P-loop_NTPase"/>
</dbReference>
<dbReference type="InterPro" id="IPR011546">
    <property type="entry name" value="Pept_M41_FtsH_extracell"/>
</dbReference>
<dbReference type="InterPro" id="IPR000642">
    <property type="entry name" value="Peptidase_M41"/>
</dbReference>
<dbReference type="InterPro" id="IPR037219">
    <property type="entry name" value="Peptidase_M41-like"/>
</dbReference>
<dbReference type="NCBIfam" id="TIGR01241">
    <property type="entry name" value="FtsH_fam"/>
    <property type="match status" value="1"/>
</dbReference>
<dbReference type="PANTHER" id="PTHR23076:SF139">
    <property type="entry name" value="ATP-DEPENDENT ZINC METALLOPROTEASE FTSH 2, CHLOROPLASTIC"/>
    <property type="match status" value="1"/>
</dbReference>
<dbReference type="PANTHER" id="PTHR23076">
    <property type="entry name" value="METALLOPROTEASE M41 FTSH"/>
    <property type="match status" value="1"/>
</dbReference>
<dbReference type="Pfam" id="PF00004">
    <property type="entry name" value="AAA"/>
    <property type="match status" value="1"/>
</dbReference>
<dbReference type="Pfam" id="PF17862">
    <property type="entry name" value="AAA_lid_3"/>
    <property type="match status" value="1"/>
</dbReference>
<dbReference type="Pfam" id="PF06480">
    <property type="entry name" value="FtsH_ext"/>
    <property type="match status" value="1"/>
</dbReference>
<dbReference type="Pfam" id="PF01434">
    <property type="entry name" value="Peptidase_M41"/>
    <property type="match status" value="1"/>
</dbReference>
<dbReference type="SMART" id="SM00382">
    <property type="entry name" value="AAA"/>
    <property type="match status" value="1"/>
</dbReference>
<dbReference type="SUPFAM" id="SSF140990">
    <property type="entry name" value="FtsH protease domain-like"/>
    <property type="match status" value="1"/>
</dbReference>
<dbReference type="SUPFAM" id="SSF52540">
    <property type="entry name" value="P-loop containing nucleoside triphosphate hydrolases"/>
    <property type="match status" value="1"/>
</dbReference>
<dbReference type="PROSITE" id="PS00674">
    <property type="entry name" value="AAA"/>
    <property type="match status" value="1"/>
</dbReference>
<reference key="1">
    <citation type="journal article" date="1995" name="Plant Mol. Biol. Rep.">
        <title>The chloroplast genome of a chlorophyll a+c-containing alga, Odontella sinensis.</title>
        <authorList>
            <person name="Kowallik K.V."/>
            <person name="Stoebe B."/>
            <person name="Schaffran I."/>
            <person name="Kroth-Pancic P."/>
            <person name="Freier U."/>
        </authorList>
    </citation>
    <scope>NUCLEOTIDE SEQUENCE [LARGE SCALE GENOMIC DNA]</scope>
</reference>
<sequence>MNDNKNNTVRNLLIGIALLSGISLTAKKFDLIGVQGSESGKNINQVNPNVISSKMTYGRFLEYLEMGWVNQVDLYDNSRNAIVQASSPELGNRPQTIRVEIPVGASQLIQKLKEYNIDFDAHPAEQKNIFVNILSNILLPIIFITGLVYLFQNSENFGGGSGQSPMSLGKSTARFERRPDTGVSFKDIAGIDEAKTEFEEIVSFLKEPDKYTIVGAKIPKGILLVGPPGTGKTLLAKAIANEADVPFFSVAGSEFVEMFIGIGAARVRDLFKKASENAPCIVFIDEIDAVGRERGAGVGGGNDEREQTLNQLLTEMDGFKENKGVIVVGATNRADILDAALLRPGRFDRQVTVNLPDRLGRVGILKVHARNKPLGEDVSLVQLANRTPGFSGADLANLLNEAAILATRYKKSSITKNEVNEAADRIIGGIAGAPMEDTKNKRLIAYHEVGHAITGSVLKSHDEVEKITLTPRGGAKGLTWFTPEEDQSLLSRSALLARIITTLGGRAAEQVIFGEPEVTTGASSDLQQVTNLARQMVTRFGMSNIGPLALEDESTGQVFLGGNMASGSEYAENIADRIDDEVRKIITYCYEKAIEIVLDNRVVIDLIVEKLLDKETMDGDEFRELLSTYTILPNKNIPYVSKFN</sequence>
<keyword id="KW-0067">ATP-binding</keyword>
<keyword id="KW-0150">Chloroplast</keyword>
<keyword id="KW-0378">Hydrolase</keyword>
<keyword id="KW-0472">Membrane</keyword>
<keyword id="KW-0479">Metal-binding</keyword>
<keyword id="KW-0482">Metalloprotease</keyword>
<keyword id="KW-0547">Nucleotide-binding</keyword>
<keyword id="KW-0934">Plastid</keyword>
<keyword id="KW-0645">Protease</keyword>
<keyword id="KW-0793">Thylakoid</keyword>
<keyword id="KW-0812">Transmembrane</keyword>
<keyword id="KW-1133">Transmembrane helix</keyword>
<keyword id="KW-0862">Zinc</keyword>
<protein>
    <recommendedName>
        <fullName evidence="1">ATP-dependent zinc metalloprotease FtsH</fullName>
        <ecNumber evidence="1">3.4.24.-</ecNumber>
    </recommendedName>
</protein>
<accession>P49825</accession>
<name>FTSH_TRICV</name>